<keyword id="KW-0119">Carbohydrate metabolism</keyword>
<keyword id="KW-0963">Cytoplasm</keyword>
<keyword id="KW-0413">Isomerase</keyword>
<keyword id="KW-0479">Metal-binding</keyword>
<keyword id="KW-1185">Reference proteome</keyword>
<keyword id="KW-0862">Zinc</keyword>
<organism>
    <name type="scientific">Azoarcus sp. (strain BH72)</name>
    <dbReference type="NCBI Taxonomy" id="418699"/>
    <lineage>
        <taxon>Bacteria</taxon>
        <taxon>Pseudomonadati</taxon>
        <taxon>Pseudomonadota</taxon>
        <taxon>Betaproteobacteria</taxon>
        <taxon>Rhodocyclales</taxon>
        <taxon>Zoogloeaceae</taxon>
        <taxon>Azoarcus</taxon>
    </lineage>
</organism>
<comment type="function">
    <text evidence="1">Catalyzes the isomerization of sedoheptulose 7-phosphate in D-glycero-D-manno-heptose 7-phosphate.</text>
</comment>
<comment type="catalytic activity">
    <reaction evidence="1">
        <text>2 D-sedoheptulose 7-phosphate = D-glycero-alpha-D-manno-heptose 7-phosphate + D-glycero-beta-D-manno-heptose 7-phosphate</text>
        <dbReference type="Rhea" id="RHEA:27489"/>
        <dbReference type="ChEBI" id="CHEBI:57483"/>
        <dbReference type="ChEBI" id="CHEBI:60203"/>
        <dbReference type="ChEBI" id="CHEBI:60204"/>
        <dbReference type="EC" id="5.3.1.28"/>
    </reaction>
</comment>
<comment type="cofactor">
    <cofactor evidence="1">
        <name>Zn(2+)</name>
        <dbReference type="ChEBI" id="CHEBI:29105"/>
    </cofactor>
    <text evidence="1">Binds 1 zinc ion per subunit.</text>
</comment>
<comment type="pathway">
    <text evidence="1">Carbohydrate biosynthesis; D-glycero-D-manno-heptose 7-phosphate biosynthesis; D-glycero-alpha-D-manno-heptose 7-phosphate and D-glycero-beta-D-manno-heptose 7-phosphate from sedoheptulose 7-phosphate: step 1/1.</text>
</comment>
<comment type="subunit">
    <text evidence="1">Homotetramer.</text>
</comment>
<comment type="subcellular location">
    <subcellularLocation>
        <location evidence="1">Cytoplasm</location>
    </subcellularLocation>
</comment>
<comment type="miscellaneous">
    <text evidence="1">The reaction produces a racemic mixture of D-glycero-alpha-D-manno-heptose 7-phosphate and D-glycero-beta-D-manno-heptose 7-phosphate.</text>
</comment>
<comment type="similarity">
    <text evidence="1">Belongs to the SIS family. GmhA subfamily.</text>
</comment>
<protein>
    <recommendedName>
        <fullName evidence="1">Phosphoheptose isomerase</fullName>
        <ecNumber evidence="1">5.3.1.28</ecNumber>
    </recommendedName>
    <alternativeName>
        <fullName evidence="1">Sedoheptulose 7-phosphate isomerase</fullName>
    </alternativeName>
</protein>
<evidence type="ECO:0000255" key="1">
    <source>
        <dbReference type="HAMAP-Rule" id="MF_00067"/>
    </source>
</evidence>
<feature type="chain" id="PRO_1000009050" description="Phosphoheptose isomerase">
    <location>
        <begin position="1"/>
        <end position="197"/>
    </location>
</feature>
<feature type="domain" description="SIS" evidence="1">
    <location>
        <begin position="36"/>
        <end position="197"/>
    </location>
</feature>
<feature type="binding site" evidence="1">
    <location>
        <begin position="51"/>
        <end position="53"/>
    </location>
    <ligand>
        <name>substrate</name>
    </ligand>
</feature>
<feature type="binding site" evidence="1">
    <location>
        <position position="60"/>
    </location>
    <ligand>
        <name>Zn(2+)</name>
        <dbReference type="ChEBI" id="CHEBI:29105"/>
    </ligand>
</feature>
<feature type="binding site" evidence="1">
    <location>
        <position position="64"/>
    </location>
    <ligand>
        <name>substrate</name>
    </ligand>
</feature>
<feature type="binding site" evidence="1">
    <location>
        <position position="64"/>
    </location>
    <ligand>
        <name>Zn(2+)</name>
        <dbReference type="ChEBI" id="CHEBI:29105"/>
    </ligand>
</feature>
<feature type="binding site" evidence="1">
    <location>
        <begin position="93"/>
        <end position="94"/>
    </location>
    <ligand>
        <name>substrate</name>
    </ligand>
</feature>
<feature type="binding site" evidence="1">
    <location>
        <begin position="119"/>
        <end position="121"/>
    </location>
    <ligand>
        <name>substrate</name>
    </ligand>
</feature>
<feature type="binding site" evidence="1">
    <location>
        <position position="124"/>
    </location>
    <ligand>
        <name>substrate</name>
    </ligand>
</feature>
<feature type="binding site" evidence="1">
    <location>
        <position position="174"/>
    </location>
    <ligand>
        <name>substrate</name>
    </ligand>
</feature>
<feature type="binding site" evidence="1">
    <location>
        <position position="174"/>
    </location>
    <ligand>
        <name>Zn(2+)</name>
        <dbReference type="ChEBI" id="CHEBI:29105"/>
    </ligand>
</feature>
<feature type="binding site" evidence="1">
    <location>
        <position position="182"/>
    </location>
    <ligand>
        <name>Zn(2+)</name>
        <dbReference type="ChEBI" id="CHEBI:29105"/>
    </ligand>
</feature>
<sequence length="197" mass="21027">MDLIDRISRQFEDSAQTKLAAVEWMAAPIAQAVEMMTASLMNNGKILACGNGGSAADAQHFAAELLNRFEMERPPLAAVALTTDTSTLTSIANDYDFVQVFSKQVRALGQPGDVLLAISTSGNSPNVIDAIQAAHEREMHVVALTGKGGGRIGEMLSPTDVHLCVPADRTARIQEVHLLTLHCLCDGIDCLLLGVEE</sequence>
<gene>
    <name evidence="1" type="primary">gmhA</name>
    <name type="ordered locus">azo0870</name>
</gene>
<accession>A1K3T2</accession>
<dbReference type="EC" id="5.3.1.28" evidence="1"/>
<dbReference type="EMBL" id="AM406670">
    <property type="protein sequence ID" value="CAL93487.1"/>
    <property type="molecule type" value="Genomic_DNA"/>
</dbReference>
<dbReference type="RefSeq" id="WP_011764604.1">
    <property type="nucleotide sequence ID" value="NC_008702.1"/>
</dbReference>
<dbReference type="SMR" id="A1K3T2"/>
<dbReference type="STRING" id="62928.azo0870"/>
<dbReference type="KEGG" id="azo:azo0870"/>
<dbReference type="eggNOG" id="COG0279">
    <property type="taxonomic scope" value="Bacteria"/>
</dbReference>
<dbReference type="HOGENOM" id="CLU_080999_3_1_4"/>
<dbReference type="UniPathway" id="UPA00041">
    <property type="reaction ID" value="UER00436"/>
</dbReference>
<dbReference type="Proteomes" id="UP000002588">
    <property type="component" value="Chromosome"/>
</dbReference>
<dbReference type="GO" id="GO:0005737">
    <property type="term" value="C:cytoplasm"/>
    <property type="evidence" value="ECO:0007669"/>
    <property type="project" value="UniProtKB-SubCell"/>
</dbReference>
<dbReference type="GO" id="GO:0097367">
    <property type="term" value="F:carbohydrate derivative binding"/>
    <property type="evidence" value="ECO:0007669"/>
    <property type="project" value="InterPro"/>
</dbReference>
<dbReference type="GO" id="GO:0008968">
    <property type="term" value="F:D-sedoheptulose 7-phosphate isomerase activity"/>
    <property type="evidence" value="ECO:0007669"/>
    <property type="project" value="UniProtKB-UniRule"/>
</dbReference>
<dbReference type="GO" id="GO:0008270">
    <property type="term" value="F:zinc ion binding"/>
    <property type="evidence" value="ECO:0007669"/>
    <property type="project" value="UniProtKB-UniRule"/>
</dbReference>
<dbReference type="GO" id="GO:0005975">
    <property type="term" value="P:carbohydrate metabolic process"/>
    <property type="evidence" value="ECO:0007669"/>
    <property type="project" value="UniProtKB-UniRule"/>
</dbReference>
<dbReference type="GO" id="GO:2001061">
    <property type="term" value="P:D-glycero-D-manno-heptose 7-phosphate biosynthetic process"/>
    <property type="evidence" value="ECO:0007669"/>
    <property type="project" value="UniProtKB-UniPathway"/>
</dbReference>
<dbReference type="CDD" id="cd05006">
    <property type="entry name" value="SIS_GmhA"/>
    <property type="match status" value="1"/>
</dbReference>
<dbReference type="Gene3D" id="3.40.50.10490">
    <property type="entry name" value="Glucose-6-phosphate isomerase like protein, domain 1"/>
    <property type="match status" value="1"/>
</dbReference>
<dbReference type="HAMAP" id="MF_00067">
    <property type="entry name" value="GmhA"/>
    <property type="match status" value="1"/>
</dbReference>
<dbReference type="InterPro" id="IPR035461">
    <property type="entry name" value="GmhA/DiaA"/>
</dbReference>
<dbReference type="InterPro" id="IPR004515">
    <property type="entry name" value="Phosphoheptose_Isoase"/>
</dbReference>
<dbReference type="InterPro" id="IPR001347">
    <property type="entry name" value="SIS_dom"/>
</dbReference>
<dbReference type="InterPro" id="IPR046348">
    <property type="entry name" value="SIS_dom_sf"/>
</dbReference>
<dbReference type="InterPro" id="IPR050099">
    <property type="entry name" value="SIS_GmhA/DiaA_subfam"/>
</dbReference>
<dbReference type="NCBIfam" id="NF010546">
    <property type="entry name" value="PRK13936.1"/>
    <property type="match status" value="1"/>
</dbReference>
<dbReference type="PANTHER" id="PTHR30390:SF6">
    <property type="entry name" value="DNAA INITIATOR-ASSOCIATING PROTEIN DIAA"/>
    <property type="match status" value="1"/>
</dbReference>
<dbReference type="PANTHER" id="PTHR30390">
    <property type="entry name" value="SEDOHEPTULOSE 7-PHOSPHATE ISOMERASE / DNAA INITIATOR-ASSOCIATING FACTOR FOR REPLICATION INITIATION"/>
    <property type="match status" value="1"/>
</dbReference>
<dbReference type="Pfam" id="PF13580">
    <property type="entry name" value="SIS_2"/>
    <property type="match status" value="1"/>
</dbReference>
<dbReference type="SUPFAM" id="SSF53697">
    <property type="entry name" value="SIS domain"/>
    <property type="match status" value="1"/>
</dbReference>
<dbReference type="PROSITE" id="PS51464">
    <property type="entry name" value="SIS"/>
    <property type="match status" value="1"/>
</dbReference>
<reference key="1">
    <citation type="journal article" date="2006" name="Nat. Biotechnol.">
        <title>Complete genome of the mutualistic, N2-fixing grass endophyte Azoarcus sp. strain BH72.</title>
        <authorList>
            <person name="Krause A."/>
            <person name="Ramakumar A."/>
            <person name="Bartels D."/>
            <person name="Battistoni F."/>
            <person name="Bekel T."/>
            <person name="Boch J."/>
            <person name="Boehm M."/>
            <person name="Friedrich F."/>
            <person name="Hurek T."/>
            <person name="Krause L."/>
            <person name="Linke B."/>
            <person name="McHardy A.C."/>
            <person name="Sarkar A."/>
            <person name="Schneiker S."/>
            <person name="Syed A.A."/>
            <person name="Thauer R."/>
            <person name="Vorhoelter F.-J."/>
            <person name="Weidner S."/>
            <person name="Puehler A."/>
            <person name="Reinhold-Hurek B."/>
            <person name="Kaiser O."/>
            <person name="Goesmann A."/>
        </authorList>
    </citation>
    <scope>NUCLEOTIDE SEQUENCE [LARGE SCALE GENOMIC DNA]</scope>
    <source>
        <strain>BH72</strain>
    </source>
</reference>
<name>GMHA_AZOSB</name>
<proteinExistence type="inferred from homology"/>